<feature type="chain" id="PRO_0000298848" description="NADH-quinone oxidoreductase subunit H">
    <location>
        <begin position="1"/>
        <end position="331"/>
    </location>
</feature>
<feature type="transmembrane region" description="Helical" evidence="1">
    <location>
        <begin position="13"/>
        <end position="33"/>
    </location>
</feature>
<feature type="transmembrane region" description="Helical" evidence="1">
    <location>
        <begin position="80"/>
        <end position="100"/>
    </location>
</feature>
<feature type="transmembrane region" description="Helical" evidence="1">
    <location>
        <begin position="113"/>
        <end position="133"/>
    </location>
</feature>
<feature type="transmembrane region" description="Helical" evidence="1">
    <location>
        <begin position="159"/>
        <end position="179"/>
    </location>
</feature>
<feature type="transmembrane region" description="Helical" evidence="1">
    <location>
        <begin position="183"/>
        <end position="203"/>
    </location>
</feature>
<feature type="transmembrane region" description="Helical" evidence="1">
    <location>
        <begin position="249"/>
        <end position="269"/>
    </location>
</feature>
<feature type="transmembrane region" description="Helical" evidence="1">
    <location>
        <begin position="273"/>
        <end position="293"/>
    </location>
</feature>
<feature type="transmembrane region" description="Helical" evidence="1">
    <location>
        <begin position="311"/>
        <end position="331"/>
    </location>
</feature>
<protein>
    <recommendedName>
        <fullName evidence="1">NADH-quinone oxidoreductase subunit H</fullName>
        <ecNumber evidence="1">7.1.1.-</ecNumber>
    </recommendedName>
    <alternativeName>
        <fullName evidence="1">NADH dehydrogenase I subunit H</fullName>
    </alternativeName>
    <alternativeName>
        <fullName evidence="1">NDH-1 subunit H</fullName>
    </alternativeName>
</protein>
<name>NUOH_RUBXD</name>
<dbReference type="EC" id="7.1.1.-" evidence="1"/>
<dbReference type="EMBL" id="CP000386">
    <property type="protein sequence ID" value="ABG04591.1"/>
    <property type="molecule type" value="Genomic_DNA"/>
</dbReference>
<dbReference type="RefSeq" id="WP_011564608.1">
    <property type="nucleotide sequence ID" value="NC_008148.1"/>
</dbReference>
<dbReference type="SMR" id="Q1AVI7"/>
<dbReference type="STRING" id="266117.Rxyl_1630"/>
<dbReference type="KEGG" id="rxy:Rxyl_1630"/>
<dbReference type="eggNOG" id="COG1005">
    <property type="taxonomic scope" value="Bacteria"/>
</dbReference>
<dbReference type="HOGENOM" id="CLU_015134_0_1_11"/>
<dbReference type="OrthoDB" id="9803734at2"/>
<dbReference type="PhylomeDB" id="Q1AVI7"/>
<dbReference type="Proteomes" id="UP000006637">
    <property type="component" value="Chromosome"/>
</dbReference>
<dbReference type="GO" id="GO:0005886">
    <property type="term" value="C:plasma membrane"/>
    <property type="evidence" value="ECO:0007669"/>
    <property type="project" value="UniProtKB-SubCell"/>
</dbReference>
<dbReference type="GO" id="GO:0003954">
    <property type="term" value="F:NADH dehydrogenase activity"/>
    <property type="evidence" value="ECO:0007669"/>
    <property type="project" value="TreeGrafter"/>
</dbReference>
<dbReference type="GO" id="GO:0016655">
    <property type="term" value="F:oxidoreductase activity, acting on NAD(P)H, quinone or similar compound as acceptor"/>
    <property type="evidence" value="ECO:0007669"/>
    <property type="project" value="UniProtKB-UniRule"/>
</dbReference>
<dbReference type="GO" id="GO:0048038">
    <property type="term" value="F:quinone binding"/>
    <property type="evidence" value="ECO:0007669"/>
    <property type="project" value="UniProtKB-KW"/>
</dbReference>
<dbReference type="GO" id="GO:0009060">
    <property type="term" value="P:aerobic respiration"/>
    <property type="evidence" value="ECO:0007669"/>
    <property type="project" value="TreeGrafter"/>
</dbReference>
<dbReference type="HAMAP" id="MF_01350">
    <property type="entry name" value="NDH1_NuoH"/>
    <property type="match status" value="1"/>
</dbReference>
<dbReference type="InterPro" id="IPR001694">
    <property type="entry name" value="NADH_UbQ_OxRdtase_su1/FPO"/>
</dbReference>
<dbReference type="InterPro" id="IPR018086">
    <property type="entry name" value="NADH_UbQ_OxRdtase_su1_CS"/>
</dbReference>
<dbReference type="NCBIfam" id="NF004741">
    <property type="entry name" value="PRK06076.1-2"/>
    <property type="match status" value="1"/>
</dbReference>
<dbReference type="PANTHER" id="PTHR11432">
    <property type="entry name" value="NADH DEHYDROGENASE SUBUNIT 1"/>
    <property type="match status" value="1"/>
</dbReference>
<dbReference type="PANTHER" id="PTHR11432:SF3">
    <property type="entry name" value="NADH-UBIQUINONE OXIDOREDUCTASE CHAIN 1"/>
    <property type="match status" value="1"/>
</dbReference>
<dbReference type="Pfam" id="PF00146">
    <property type="entry name" value="NADHdh"/>
    <property type="match status" value="1"/>
</dbReference>
<dbReference type="PROSITE" id="PS00668">
    <property type="entry name" value="COMPLEX1_ND1_2"/>
    <property type="match status" value="1"/>
</dbReference>
<reference key="1">
    <citation type="submission" date="2006-06" db="EMBL/GenBank/DDBJ databases">
        <title>Complete sequence of Rubrobacter xylanophilus DSM 9941.</title>
        <authorList>
            <consortium name="US DOE Joint Genome Institute"/>
            <person name="Copeland A."/>
            <person name="Lucas S."/>
            <person name="Lapidus A."/>
            <person name="Barry K."/>
            <person name="Detter J.C."/>
            <person name="Glavina del Rio T."/>
            <person name="Hammon N."/>
            <person name="Israni S."/>
            <person name="Dalin E."/>
            <person name="Tice H."/>
            <person name="Pitluck S."/>
            <person name="Munk A.C."/>
            <person name="Brettin T."/>
            <person name="Bruce D."/>
            <person name="Han C."/>
            <person name="Tapia R."/>
            <person name="Gilna P."/>
            <person name="Schmutz J."/>
            <person name="Larimer F."/>
            <person name="Land M."/>
            <person name="Hauser L."/>
            <person name="Kyrpides N."/>
            <person name="Lykidis A."/>
            <person name="da Costa M.S."/>
            <person name="Rainey F.A."/>
            <person name="Empadinhas N."/>
            <person name="Jolivet E."/>
            <person name="Battista J.R."/>
            <person name="Richardson P."/>
        </authorList>
    </citation>
    <scope>NUCLEOTIDE SEQUENCE [LARGE SCALE GENOMIC DNA]</scope>
    <source>
        <strain>DSM 9941 / JCM 11954 / NBRC 16129 / PRD-1</strain>
    </source>
</reference>
<keyword id="KW-1003">Cell membrane</keyword>
<keyword id="KW-0472">Membrane</keyword>
<keyword id="KW-0520">NAD</keyword>
<keyword id="KW-0874">Quinone</keyword>
<keyword id="KW-1185">Reference proteome</keyword>
<keyword id="KW-1278">Translocase</keyword>
<keyword id="KW-0812">Transmembrane</keyword>
<keyword id="KW-1133">Transmembrane helix</keyword>
<keyword id="KW-0830">Ubiquinone</keyword>
<evidence type="ECO:0000255" key="1">
    <source>
        <dbReference type="HAMAP-Rule" id="MF_01350"/>
    </source>
</evidence>
<proteinExistence type="inferred from homology"/>
<accession>Q1AVI7</accession>
<comment type="function">
    <text evidence="1">NDH-1 shuttles electrons from NADH, via FMN and iron-sulfur (Fe-S) centers, to quinones in the respiratory chain. The immediate electron acceptor for the enzyme in this species is believed to be ubiquinone. Couples the redox reaction to proton translocation (for every two electrons transferred, four hydrogen ions are translocated across the cytoplasmic membrane), and thus conserves the redox energy in a proton gradient. This subunit may bind ubiquinone.</text>
</comment>
<comment type="catalytic activity">
    <reaction evidence="1">
        <text>a quinone + NADH + 5 H(+)(in) = a quinol + NAD(+) + 4 H(+)(out)</text>
        <dbReference type="Rhea" id="RHEA:57888"/>
        <dbReference type="ChEBI" id="CHEBI:15378"/>
        <dbReference type="ChEBI" id="CHEBI:24646"/>
        <dbReference type="ChEBI" id="CHEBI:57540"/>
        <dbReference type="ChEBI" id="CHEBI:57945"/>
        <dbReference type="ChEBI" id="CHEBI:132124"/>
    </reaction>
</comment>
<comment type="subunit">
    <text evidence="1">NDH-1 is composed of 14 different subunits. Subunits NuoA, H, J, K, L, M, N constitute the membrane sector of the complex.</text>
</comment>
<comment type="subcellular location">
    <subcellularLocation>
        <location evidence="1">Cell membrane</location>
        <topology evidence="1">Multi-pass membrane protein</topology>
    </subcellularLocation>
</comment>
<comment type="similarity">
    <text evidence="1">Belongs to the complex I subunit 1 family.</text>
</comment>
<sequence length="331" mass="36575">MALEYLEQEPWRFLISSATVIFLVLNIAAVLTLAERKVSAYIQLRYGPNRVGPRGLLQPAADVVKLFIKENVSPGRADRWVFLAAPIAMFLPAAAVWLVIPFGPGMVVADLNIGLVYFFAITSIGALGVIMAGYGSRSNFSLLGALRGAGQMISYEVPLILSLLGVAMLTGSLSMVDIVEYQAGGFWNWIIWPQLPMFLAFFVSGLAEVKRIPFDLPEGESEIVGGFMIEYSGMTWALIQASEFASMAVMSAVASTLFLGGWQPPLPFLDLGVFNWLWLGIKTTLLIFVFQWIRWTLPRLRMDQLMDLGWKILVPVTILWLFVTAGAMLVI</sequence>
<gene>
    <name evidence="1" type="primary">nuoH</name>
    <name type="ordered locus">Rxyl_1630</name>
</gene>
<organism>
    <name type="scientific">Rubrobacter xylanophilus (strain DSM 9941 / JCM 11954 / NBRC 16129 / PRD-1)</name>
    <dbReference type="NCBI Taxonomy" id="266117"/>
    <lineage>
        <taxon>Bacteria</taxon>
        <taxon>Bacillati</taxon>
        <taxon>Actinomycetota</taxon>
        <taxon>Rubrobacteria</taxon>
        <taxon>Rubrobacterales</taxon>
        <taxon>Rubrobacteraceae</taxon>
        <taxon>Rubrobacter</taxon>
    </lineage>
</organism>